<proteinExistence type="evidence at protein level"/>
<keyword id="KW-0963">Cytoplasm</keyword>
<keyword id="KW-0489">Methyltransferase</keyword>
<keyword id="KW-0496">Mitochondrion</keyword>
<keyword id="KW-1267">Proteomics identification</keyword>
<keyword id="KW-1185">Reference proteome</keyword>
<keyword id="KW-0808">Transferase</keyword>
<keyword id="KW-0809">Transit peptide</keyword>
<reference key="1">
    <citation type="journal article" date="2004" name="Nat. Genet.">
        <title>Complete sequencing and characterization of 21,243 full-length human cDNAs.</title>
        <authorList>
            <person name="Ota T."/>
            <person name="Suzuki Y."/>
            <person name="Nishikawa T."/>
            <person name="Otsuki T."/>
            <person name="Sugiyama T."/>
            <person name="Irie R."/>
            <person name="Wakamatsu A."/>
            <person name="Hayashi K."/>
            <person name="Sato H."/>
            <person name="Nagai K."/>
            <person name="Kimura K."/>
            <person name="Makita H."/>
            <person name="Sekine M."/>
            <person name="Obayashi M."/>
            <person name="Nishi T."/>
            <person name="Shibahara T."/>
            <person name="Tanaka T."/>
            <person name="Ishii S."/>
            <person name="Yamamoto J."/>
            <person name="Saito K."/>
            <person name="Kawai Y."/>
            <person name="Isono Y."/>
            <person name="Nakamura Y."/>
            <person name="Nagahari K."/>
            <person name="Murakami K."/>
            <person name="Yasuda T."/>
            <person name="Iwayanagi T."/>
            <person name="Wagatsuma M."/>
            <person name="Shiratori A."/>
            <person name="Sudo H."/>
            <person name="Hosoiri T."/>
            <person name="Kaku Y."/>
            <person name="Kodaira H."/>
            <person name="Kondo H."/>
            <person name="Sugawara M."/>
            <person name="Takahashi M."/>
            <person name="Kanda K."/>
            <person name="Yokoi T."/>
            <person name="Furuya T."/>
            <person name="Kikkawa E."/>
            <person name="Omura Y."/>
            <person name="Abe K."/>
            <person name="Kamihara K."/>
            <person name="Katsuta N."/>
            <person name="Sato K."/>
            <person name="Tanikawa M."/>
            <person name="Yamazaki M."/>
            <person name="Ninomiya K."/>
            <person name="Ishibashi T."/>
            <person name="Yamashita H."/>
            <person name="Murakawa K."/>
            <person name="Fujimori K."/>
            <person name="Tanai H."/>
            <person name="Kimata M."/>
            <person name="Watanabe M."/>
            <person name="Hiraoka S."/>
            <person name="Chiba Y."/>
            <person name="Ishida S."/>
            <person name="Ono Y."/>
            <person name="Takiguchi S."/>
            <person name="Watanabe S."/>
            <person name="Yosida M."/>
            <person name="Hotuta T."/>
            <person name="Kusano J."/>
            <person name="Kanehori K."/>
            <person name="Takahashi-Fujii A."/>
            <person name="Hara H."/>
            <person name="Tanase T.-O."/>
            <person name="Nomura Y."/>
            <person name="Togiya S."/>
            <person name="Komai F."/>
            <person name="Hara R."/>
            <person name="Takeuchi K."/>
            <person name="Arita M."/>
            <person name="Imose N."/>
            <person name="Musashino K."/>
            <person name="Yuuki H."/>
            <person name="Oshima A."/>
            <person name="Sasaki N."/>
            <person name="Aotsuka S."/>
            <person name="Yoshikawa Y."/>
            <person name="Matsunawa H."/>
            <person name="Ichihara T."/>
            <person name="Shiohata N."/>
            <person name="Sano S."/>
            <person name="Moriya S."/>
            <person name="Momiyama H."/>
            <person name="Satoh N."/>
            <person name="Takami S."/>
            <person name="Terashima Y."/>
            <person name="Suzuki O."/>
            <person name="Nakagawa S."/>
            <person name="Senoh A."/>
            <person name="Mizoguchi H."/>
            <person name="Goto Y."/>
            <person name="Shimizu F."/>
            <person name="Wakebe H."/>
            <person name="Hishigaki H."/>
            <person name="Watanabe T."/>
            <person name="Sugiyama A."/>
            <person name="Takemoto M."/>
            <person name="Kawakami B."/>
            <person name="Yamazaki M."/>
            <person name="Watanabe K."/>
            <person name="Kumagai A."/>
            <person name="Itakura S."/>
            <person name="Fukuzumi Y."/>
            <person name="Fujimori Y."/>
            <person name="Komiyama M."/>
            <person name="Tashiro H."/>
            <person name="Tanigami A."/>
            <person name="Fujiwara T."/>
            <person name="Ono T."/>
            <person name="Yamada K."/>
            <person name="Fujii Y."/>
            <person name="Ozaki K."/>
            <person name="Hirao M."/>
            <person name="Ohmori Y."/>
            <person name="Kawabata A."/>
            <person name="Hikiji T."/>
            <person name="Kobatake N."/>
            <person name="Inagaki H."/>
            <person name="Ikema Y."/>
            <person name="Okamoto S."/>
            <person name="Okitani R."/>
            <person name="Kawakami T."/>
            <person name="Noguchi S."/>
            <person name="Itoh T."/>
            <person name="Shigeta K."/>
            <person name="Senba T."/>
            <person name="Matsumura K."/>
            <person name="Nakajima Y."/>
            <person name="Mizuno T."/>
            <person name="Morinaga M."/>
            <person name="Sasaki M."/>
            <person name="Togashi T."/>
            <person name="Oyama M."/>
            <person name="Hata H."/>
            <person name="Watanabe M."/>
            <person name="Komatsu T."/>
            <person name="Mizushima-Sugano J."/>
            <person name="Satoh T."/>
            <person name="Shirai Y."/>
            <person name="Takahashi Y."/>
            <person name="Nakagawa K."/>
            <person name="Okumura K."/>
            <person name="Nagase T."/>
            <person name="Nomura N."/>
            <person name="Kikuchi H."/>
            <person name="Masuho Y."/>
            <person name="Yamashita R."/>
            <person name="Nakai K."/>
            <person name="Yada T."/>
            <person name="Nakamura Y."/>
            <person name="Ohara O."/>
            <person name="Isogai T."/>
            <person name="Sugano S."/>
        </authorList>
    </citation>
    <scope>NUCLEOTIDE SEQUENCE [LARGE SCALE MRNA]</scope>
    <source>
        <tissue>Cervix</tissue>
    </source>
</reference>
<reference key="2">
    <citation type="submission" date="2005-09" db="EMBL/GenBank/DDBJ databases">
        <authorList>
            <person name="Mural R.J."/>
            <person name="Istrail S."/>
            <person name="Sutton G.G."/>
            <person name="Florea L."/>
            <person name="Halpern A.L."/>
            <person name="Mobarry C.M."/>
            <person name="Lippert R."/>
            <person name="Walenz B."/>
            <person name="Shatkay H."/>
            <person name="Dew I."/>
            <person name="Miller J.R."/>
            <person name="Flanigan M.J."/>
            <person name="Edwards N.J."/>
            <person name="Bolanos R."/>
            <person name="Fasulo D."/>
            <person name="Halldorsson B.V."/>
            <person name="Hannenhalli S."/>
            <person name="Turner R."/>
            <person name="Yooseph S."/>
            <person name="Lu F."/>
            <person name="Nusskern D.R."/>
            <person name="Shue B.C."/>
            <person name="Zheng X.H."/>
            <person name="Zhong F."/>
            <person name="Delcher A.L."/>
            <person name="Huson D.H."/>
            <person name="Kravitz S.A."/>
            <person name="Mouchard L."/>
            <person name="Reinert K."/>
            <person name="Remington K.A."/>
            <person name="Clark A.G."/>
            <person name="Waterman M.S."/>
            <person name="Eichler E.E."/>
            <person name="Adams M.D."/>
            <person name="Hunkapiller M.W."/>
            <person name="Myers E.W."/>
            <person name="Venter J.C."/>
        </authorList>
    </citation>
    <scope>NUCLEOTIDE SEQUENCE [LARGE SCALE GENOMIC DNA]</scope>
</reference>
<reference key="3">
    <citation type="journal article" date="2004" name="Genome Res.">
        <title>The status, quality, and expansion of the NIH full-length cDNA project: the Mammalian Gene Collection (MGC).</title>
        <authorList>
            <consortium name="The MGC Project Team"/>
        </authorList>
    </citation>
    <scope>NUCLEOTIDE SEQUENCE [LARGE SCALE MRNA]</scope>
    <source>
        <tissue>Brain</tissue>
        <tissue>Testis</tissue>
    </source>
</reference>
<reference key="4">
    <citation type="journal article" date="2012" name="Nat. Commun.">
        <title>Lysine methylation of VCP by a member of a novel human protein methyltransferase family.</title>
        <authorList>
            <person name="Kernstock S."/>
            <person name="Davydova E."/>
            <person name="Jakobsson M."/>
            <person name="Moen A."/>
            <person name="Pettersen S."/>
            <person name="Maelandsmo G.M."/>
            <person name="Egge-Jacobsen W."/>
            <person name="Falnes P.O."/>
        </authorList>
    </citation>
    <scope>IDENTIFICATION</scope>
</reference>
<reference key="5">
    <citation type="journal article" date="2013" name="PLoS Genet.">
        <title>A newly uncovered group of distantly related lysine methyltransferases preferentially interact with molecular chaperones to regulate their activity.</title>
        <authorList>
            <person name="Cloutier P."/>
            <person name="Lavallee-Adam M."/>
            <person name="Faubert D."/>
            <person name="Blanchette M."/>
            <person name="Coulombe B."/>
        </authorList>
    </citation>
    <scope>INTERACTION WITH HSPD1</scope>
    <scope>SUBCELLULAR LOCATION</scope>
</reference>
<reference key="6">
    <citation type="journal article" date="2014" name="J. Biol. Chem.">
        <title>Human METTL20 methylates lysine residues adjacent to the recognition loop of the electron transfer flavoprotein in mitochondria.</title>
        <authorList>
            <person name="Rhein V.F."/>
            <person name="Carroll J."/>
            <person name="He J."/>
            <person name="Ding S."/>
            <person name="Fearnley I.M."/>
            <person name="Walker J.E."/>
        </authorList>
    </citation>
    <scope>FUNCTION</scope>
    <scope>CATALYTIC ACTIVITY</scope>
    <scope>SUBCELLULAR LOCATION</scope>
</reference>
<reference key="7">
    <citation type="journal article" date="2015" name="J. Biol. Chem.">
        <title>Human METTL20 is a mitochondrial lysine methyltransferase that targets the beta subunit of electron transfer flavoprotein (ETFbeta) and modulates its activity.</title>
        <authorList>
            <person name="Malecki J."/>
            <person name="Ho A.Y."/>
            <person name="Moen A."/>
            <person name="Dahl H.A."/>
            <person name="Falnes P.O."/>
        </authorList>
    </citation>
    <scope>FUNCTION</scope>
    <scope>CATALYTIC ACTIVITY</scope>
    <scope>SUBCELLULAR LOCATION</scope>
    <scope>MUTAGENESIS OF ASP-121</scope>
</reference>
<gene>
    <name evidence="8" type="primary">ETFBKMT</name>
    <name type="synonym">C12orf72</name>
    <name type="synonym">METTL20</name>
</gene>
<sequence length="262" mass="29461">MALSLGWKAHRNHCGLLLQALRSSGLLLFPCGQCPWRGAGSFLDPEIKAFLEENTEVTSSGSLTPEIQLRLLTPRCKFWWERADLWPHSDPYWAIYWPGGQALSRYLLDNPDVVRGKSVLDLGSGCGATAIAAKMSGASRILANDIDPIAGMAITLNCELNRLNPFPILIQNILNLEQDKWDLVVLGDMFYDEDLADSLHQWLKKCFWTYRTRVLIGDPGRPQFSGHSIQHHLHKVVEYSLLESTRQENSGLTTSTVWGFQP</sequence>
<name>ETKMT_HUMAN</name>
<accession>Q8IXQ9</accession>
<accession>D3DUW3</accession>
<protein>
    <recommendedName>
        <fullName evidence="5">Electron transfer flavoprotein beta subunit lysine methyltransferase</fullName>
        <ecNumber evidence="3 4">2.1.1.-</ecNumber>
    </recommendedName>
    <alternativeName>
        <fullName evidence="5">ETFB lysine methyltransferase</fullName>
        <shortName evidence="5">ETFB-KMT</shortName>
    </alternativeName>
    <alternativeName>
        <fullName>Protein N-lysine methyltransferase METTL20</fullName>
    </alternativeName>
</protein>
<feature type="transit peptide" description="Mitochondrion" evidence="1">
    <location>
        <begin position="1"/>
        <end position="38"/>
    </location>
</feature>
<feature type="chain" id="PRO_0000318709" description="Electron transfer flavoprotein beta subunit lysine methyltransferase">
    <location>
        <begin position="39"/>
        <end position="262"/>
    </location>
</feature>
<feature type="mutagenesis site" description="Loss of lysine methyltransferase activity." evidence="4">
    <original>D</original>
    <variation>A</variation>
    <location>
        <position position="121"/>
    </location>
</feature>
<organism>
    <name type="scientific">Homo sapiens</name>
    <name type="common">Human</name>
    <dbReference type="NCBI Taxonomy" id="9606"/>
    <lineage>
        <taxon>Eukaryota</taxon>
        <taxon>Metazoa</taxon>
        <taxon>Chordata</taxon>
        <taxon>Craniata</taxon>
        <taxon>Vertebrata</taxon>
        <taxon>Euteleostomi</taxon>
        <taxon>Mammalia</taxon>
        <taxon>Eutheria</taxon>
        <taxon>Euarchontoglires</taxon>
        <taxon>Primates</taxon>
        <taxon>Haplorrhini</taxon>
        <taxon>Catarrhini</taxon>
        <taxon>Hominidae</taxon>
        <taxon>Homo</taxon>
    </lineage>
</organism>
<comment type="function">
    <text evidence="3 4">Protein-lysine methyltransferase that selectively trimethylates the flavoprotein ETFB in mitochondria (PubMed:25023281, PubMed:25416781). Thereby, may negatively regulate the function of ETFB in electron transfer from Acyl-CoA dehydrogenases to the main respiratory chain (PubMed:25416781).</text>
</comment>
<comment type="catalytic activity">
    <reaction evidence="3 4">
        <text>L-lysyl-[protein] + 3 S-adenosyl-L-methionine = N(6),N(6),N(6)-trimethyl-L-lysyl-[protein] + 3 S-adenosyl-L-homocysteine + 3 H(+)</text>
        <dbReference type="Rhea" id="RHEA:54192"/>
        <dbReference type="Rhea" id="RHEA-COMP:9752"/>
        <dbReference type="Rhea" id="RHEA-COMP:13826"/>
        <dbReference type="ChEBI" id="CHEBI:15378"/>
        <dbReference type="ChEBI" id="CHEBI:29969"/>
        <dbReference type="ChEBI" id="CHEBI:57856"/>
        <dbReference type="ChEBI" id="CHEBI:59789"/>
        <dbReference type="ChEBI" id="CHEBI:61961"/>
    </reaction>
    <physiologicalReaction direction="left-to-right" evidence="7">
        <dbReference type="Rhea" id="RHEA:54193"/>
    </physiologicalReaction>
</comment>
<comment type="subunit">
    <text evidence="2">Interacts with HSPD1; this protein may possibly be a methylation substrate.</text>
</comment>
<comment type="subcellular location">
    <subcellularLocation>
        <location evidence="2">Cytoplasm</location>
    </subcellularLocation>
    <subcellularLocation>
        <location evidence="3 7">Mitochondrion matrix</location>
    </subcellularLocation>
    <text evidence="2">Concentrated in cytoplasmic granular foci.</text>
</comment>
<comment type="similarity">
    <text evidence="6">Belongs to the methyltransferase superfamily. ETFBKMT family.</text>
</comment>
<evidence type="ECO:0000255" key="1"/>
<evidence type="ECO:0000269" key="2">
    <source>
    </source>
</evidence>
<evidence type="ECO:0000269" key="3">
    <source>
    </source>
</evidence>
<evidence type="ECO:0000269" key="4">
    <source>
    </source>
</evidence>
<evidence type="ECO:0000303" key="5">
    <source>
    </source>
</evidence>
<evidence type="ECO:0000305" key="6"/>
<evidence type="ECO:0000305" key="7">
    <source>
    </source>
</evidence>
<evidence type="ECO:0000312" key="8">
    <source>
        <dbReference type="HGNC" id="HGNC:28739"/>
    </source>
</evidence>
<dbReference type="EC" id="2.1.1.-" evidence="3 4"/>
<dbReference type="EMBL" id="AK290248">
    <property type="protein sequence ID" value="BAF82937.1"/>
    <property type="molecule type" value="mRNA"/>
</dbReference>
<dbReference type="EMBL" id="CH471116">
    <property type="protein sequence ID" value="EAW88545.1"/>
    <property type="molecule type" value="Genomic_DNA"/>
</dbReference>
<dbReference type="EMBL" id="CH471116">
    <property type="protein sequence ID" value="EAW88547.1"/>
    <property type="molecule type" value="Genomic_DNA"/>
</dbReference>
<dbReference type="EMBL" id="CH471116">
    <property type="protein sequence ID" value="EAW88548.1"/>
    <property type="molecule type" value="Genomic_DNA"/>
</dbReference>
<dbReference type="EMBL" id="BC039107">
    <property type="protein sequence ID" value="AAH39107.1"/>
    <property type="molecule type" value="mRNA"/>
</dbReference>
<dbReference type="EMBL" id="BC039535">
    <property type="protein sequence ID" value="AAH39535.1"/>
    <property type="molecule type" value="mRNA"/>
</dbReference>
<dbReference type="CCDS" id="CCDS8724.1"/>
<dbReference type="RefSeq" id="NP_001129335.1">
    <property type="nucleotide sequence ID" value="NM_001135863.2"/>
</dbReference>
<dbReference type="RefSeq" id="NP_001129336.1">
    <property type="nucleotide sequence ID" value="NM_001135864.2"/>
</dbReference>
<dbReference type="RefSeq" id="NP_776163.1">
    <property type="nucleotide sequence ID" value="NM_173802.4"/>
</dbReference>
<dbReference type="RefSeq" id="XP_024304691.1">
    <property type="nucleotide sequence ID" value="XM_024448923.2"/>
</dbReference>
<dbReference type="RefSeq" id="XP_024304692.1">
    <property type="nucleotide sequence ID" value="XM_024448924.2"/>
</dbReference>
<dbReference type="RefSeq" id="XP_024304693.1">
    <property type="nucleotide sequence ID" value="XM_024448925.2"/>
</dbReference>
<dbReference type="RefSeq" id="XP_054227630.1">
    <property type="nucleotide sequence ID" value="XM_054371655.1"/>
</dbReference>
<dbReference type="RefSeq" id="XP_054227631.1">
    <property type="nucleotide sequence ID" value="XM_054371656.1"/>
</dbReference>
<dbReference type="RefSeq" id="XP_054227632.1">
    <property type="nucleotide sequence ID" value="XM_054371657.1"/>
</dbReference>
<dbReference type="SMR" id="Q8IXQ9"/>
<dbReference type="BioGRID" id="129005">
    <property type="interactions" value="36"/>
</dbReference>
<dbReference type="FunCoup" id="Q8IXQ9">
    <property type="interactions" value="77"/>
</dbReference>
<dbReference type="IntAct" id="Q8IXQ9">
    <property type="interactions" value="17"/>
</dbReference>
<dbReference type="STRING" id="9606.ENSP00000350353"/>
<dbReference type="GlyGen" id="Q8IXQ9">
    <property type="glycosylation" value="1 site, 1 O-linked glycan (1 site)"/>
</dbReference>
<dbReference type="iPTMnet" id="Q8IXQ9"/>
<dbReference type="PhosphoSitePlus" id="Q8IXQ9"/>
<dbReference type="BioMuta" id="ETFBKMT"/>
<dbReference type="DMDM" id="74759679"/>
<dbReference type="jPOST" id="Q8IXQ9"/>
<dbReference type="MassIVE" id="Q8IXQ9"/>
<dbReference type="PaxDb" id="9606-ENSP00000350353"/>
<dbReference type="PeptideAtlas" id="Q8IXQ9"/>
<dbReference type="ProteomicsDB" id="71049"/>
<dbReference type="Antibodypedia" id="24685">
    <property type="antibodies" value="32 antibodies from 14 providers"/>
</dbReference>
<dbReference type="DNASU" id="254013"/>
<dbReference type="Ensembl" id="ENST00000357721.3">
    <property type="protein sequence ID" value="ENSP00000350353.3"/>
    <property type="gene ID" value="ENSG00000139160.13"/>
</dbReference>
<dbReference type="Ensembl" id="ENST00000395763.7">
    <property type="protein sequence ID" value="ENSP00000379112.3"/>
    <property type="gene ID" value="ENSG00000139160.13"/>
</dbReference>
<dbReference type="Ensembl" id="ENST00000412352.6">
    <property type="protein sequence ID" value="ENSP00000396123.2"/>
    <property type="gene ID" value="ENSG00000139160.13"/>
</dbReference>
<dbReference type="Ensembl" id="ENST00000538463.5">
    <property type="protein sequence ID" value="ENSP00000441421.1"/>
    <property type="gene ID" value="ENSG00000139160.13"/>
</dbReference>
<dbReference type="GeneID" id="254013"/>
<dbReference type="KEGG" id="hsa:254013"/>
<dbReference type="MANE-Select" id="ENST00000357721.3">
    <property type="protein sequence ID" value="ENSP00000350353.3"/>
    <property type="RefSeq nucleotide sequence ID" value="NM_001135863.2"/>
    <property type="RefSeq protein sequence ID" value="NP_001129335.1"/>
</dbReference>
<dbReference type="UCSC" id="uc001rkl.4">
    <property type="organism name" value="human"/>
</dbReference>
<dbReference type="AGR" id="HGNC:28739"/>
<dbReference type="CTD" id="254013"/>
<dbReference type="GeneCards" id="ETFBKMT"/>
<dbReference type="HGNC" id="HGNC:28739">
    <property type="gene designation" value="ETFBKMT"/>
</dbReference>
<dbReference type="HPA" id="ENSG00000139160">
    <property type="expression patterns" value="Low tissue specificity"/>
</dbReference>
<dbReference type="MIM" id="615256">
    <property type="type" value="gene"/>
</dbReference>
<dbReference type="neXtProt" id="NX_Q8IXQ9"/>
<dbReference type="OpenTargets" id="ENSG00000139160"/>
<dbReference type="PharmGKB" id="PA164716777"/>
<dbReference type="VEuPathDB" id="HostDB:ENSG00000139160"/>
<dbReference type="eggNOG" id="ENOG502QUSY">
    <property type="taxonomic scope" value="Eukaryota"/>
</dbReference>
<dbReference type="GeneTree" id="ENSGT00940000162982"/>
<dbReference type="HOGENOM" id="CLU_074455_2_1_1"/>
<dbReference type="InParanoid" id="Q8IXQ9"/>
<dbReference type="OMA" id="RQENYGL"/>
<dbReference type="OrthoDB" id="194386at2759"/>
<dbReference type="PAN-GO" id="Q8IXQ9">
    <property type="GO annotations" value="3 GO annotations based on evolutionary models"/>
</dbReference>
<dbReference type="PhylomeDB" id="Q8IXQ9"/>
<dbReference type="TreeFam" id="TF314934"/>
<dbReference type="PathwayCommons" id="Q8IXQ9"/>
<dbReference type="Reactome" id="R-HSA-8876725">
    <property type="pathway name" value="Protein methylation"/>
</dbReference>
<dbReference type="SignaLink" id="Q8IXQ9"/>
<dbReference type="SIGNOR" id="Q8IXQ9"/>
<dbReference type="BioGRID-ORCS" id="254013">
    <property type="hits" value="15 hits in 1137 CRISPR screens"/>
</dbReference>
<dbReference type="ChiTaRS" id="ETFBKMT">
    <property type="organism name" value="human"/>
</dbReference>
<dbReference type="GenomeRNAi" id="254013"/>
<dbReference type="Pharos" id="Q8IXQ9">
    <property type="development level" value="Tbio"/>
</dbReference>
<dbReference type="PRO" id="PR:Q8IXQ9"/>
<dbReference type="Proteomes" id="UP000005640">
    <property type="component" value="Chromosome 12"/>
</dbReference>
<dbReference type="RNAct" id="Q8IXQ9">
    <property type="molecule type" value="protein"/>
</dbReference>
<dbReference type="Bgee" id="ENSG00000139160">
    <property type="expression patterns" value="Expressed in buccal mucosa cell and 117 other cell types or tissues"/>
</dbReference>
<dbReference type="ExpressionAtlas" id="Q8IXQ9">
    <property type="expression patterns" value="baseline and differential"/>
</dbReference>
<dbReference type="GO" id="GO:0005737">
    <property type="term" value="C:cytoplasm"/>
    <property type="evidence" value="ECO:0000314"/>
    <property type="project" value="UniProtKB"/>
</dbReference>
<dbReference type="GO" id="GO:0005759">
    <property type="term" value="C:mitochondrial matrix"/>
    <property type="evidence" value="ECO:0000314"/>
    <property type="project" value="UniProtKB"/>
</dbReference>
<dbReference type="GO" id="GO:0005739">
    <property type="term" value="C:mitochondrion"/>
    <property type="evidence" value="ECO:0006056"/>
    <property type="project" value="FlyBase"/>
</dbReference>
<dbReference type="GO" id="GO:0032991">
    <property type="term" value="C:protein-containing complex"/>
    <property type="evidence" value="ECO:0000314"/>
    <property type="project" value="UniProtKB"/>
</dbReference>
<dbReference type="GO" id="GO:0031072">
    <property type="term" value="F:heat shock protein binding"/>
    <property type="evidence" value="ECO:0000353"/>
    <property type="project" value="UniProtKB"/>
</dbReference>
<dbReference type="GO" id="GO:0016279">
    <property type="term" value="F:protein-lysine N-methyltransferase activity"/>
    <property type="evidence" value="ECO:0000315"/>
    <property type="project" value="UniProtKB"/>
</dbReference>
<dbReference type="GO" id="GO:0032259">
    <property type="term" value="P:methylation"/>
    <property type="evidence" value="ECO:0007669"/>
    <property type="project" value="UniProtKB-KW"/>
</dbReference>
<dbReference type="GO" id="GO:1904736">
    <property type="term" value="P:negative regulation of fatty acid beta-oxidation using acyl-CoA dehydrogenase"/>
    <property type="evidence" value="ECO:0000315"/>
    <property type="project" value="UniProtKB"/>
</dbReference>
<dbReference type="CDD" id="cd02440">
    <property type="entry name" value="AdoMet_MTases"/>
    <property type="match status" value="1"/>
</dbReference>
<dbReference type="FunFam" id="3.40.50.150:FF:000202">
    <property type="entry name" value="Electron transfer flavoprotein subunit beta lysine methyltransferase"/>
    <property type="match status" value="1"/>
</dbReference>
<dbReference type="Gene3D" id="3.40.50.150">
    <property type="entry name" value="Vaccinia Virus protein VP39"/>
    <property type="match status" value="1"/>
</dbReference>
<dbReference type="InterPro" id="IPR050078">
    <property type="entry name" value="Ribosomal_L11_MeTrfase_PrmA"/>
</dbReference>
<dbReference type="InterPro" id="IPR029063">
    <property type="entry name" value="SAM-dependent_MTases_sf"/>
</dbReference>
<dbReference type="PANTHER" id="PTHR43648">
    <property type="entry name" value="ELECTRON TRANSFER FLAVOPROTEIN BETA SUBUNIT LYSINE METHYLTRANSFERASE"/>
    <property type="match status" value="1"/>
</dbReference>
<dbReference type="PANTHER" id="PTHR43648:SF1">
    <property type="entry name" value="ELECTRON TRANSFER FLAVOPROTEIN BETA SUBUNIT LYSINE METHYLTRANSFERASE"/>
    <property type="match status" value="1"/>
</dbReference>
<dbReference type="Pfam" id="PF06325">
    <property type="entry name" value="PrmA"/>
    <property type="match status" value="1"/>
</dbReference>
<dbReference type="SUPFAM" id="SSF53335">
    <property type="entry name" value="S-adenosyl-L-methionine-dependent methyltransferases"/>
    <property type="match status" value="1"/>
</dbReference>